<comment type="function">
    <text evidence="1">Catalyzes the reversible isomerization of glucose-6-phosphate to fructose-6-phosphate.</text>
</comment>
<comment type="catalytic activity">
    <reaction evidence="1">
        <text>alpha-D-glucose 6-phosphate = beta-D-fructose 6-phosphate</text>
        <dbReference type="Rhea" id="RHEA:11816"/>
        <dbReference type="ChEBI" id="CHEBI:57634"/>
        <dbReference type="ChEBI" id="CHEBI:58225"/>
        <dbReference type="EC" id="5.3.1.9"/>
    </reaction>
</comment>
<comment type="pathway">
    <text evidence="1">Carbohydrate biosynthesis; gluconeogenesis.</text>
</comment>
<comment type="pathway">
    <text evidence="1">Carbohydrate degradation; glycolysis; D-glyceraldehyde 3-phosphate and glycerone phosphate from D-glucose: step 2/4.</text>
</comment>
<comment type="subcellular location">
    <subcellularLocation>
        <location evidence="1">Cytoplasm</location>
    </subcellularLocation>
</comment>
<comment type="similarity">
    <text evidence="1">Belongs to the GPI family.</text>
</comment>
<reference key="1">
    <citation type="submission" date="2006-03" db="EMBL/GenBank/DDBJ databases">
        <title>Complete sequence of Shewanella denitrificans OS217.</title>
        <authorList>
            <consortium name="US DOE Joint Genome Institute"/>
            <person name="Copeland A."/>
            <person name="Lucas S."/>
            <person name="Lapidus A."/>
            <person name="Barry K."/>
            <person name="Detter J.C."/>
            <person name="Glavina del Rio T."/>
            <person name="Hammon N."/>
            <person name="Israni S."/>
            <person name="Dalin E."/>
            <person name="Tice H."/>
            <person name="Pitluck S."/>
            <person name="Brettin T."/>
            <person name="Bruce D."/>
            <person name="Han C."/>
            <person name="Tapia R."/>
            <person name="Gilna P."/>
            <person name="Kiss H."/>
            <person name="Schmutz J."/>
            <person name="Larimer F."/>
            <person name="Land M."/>
            <person name="Hauser L."/>
            <person name="Kyrpides N."/>
            <person name="Lykidis A."/>
            <person name="Richardson P."/>
        </authorList>
    </citation>
    <scope>NUCLEOTIDE SEQUENCE [LARGE SCALE GENOMIC DNA]</scope>
    <source>
        <strain>OS217 / ATCC BAA-1090 / DSM 15013</strain>
    </source>
</reference>
<organism>
    <name type="scientific">Shewanella denitrificans (strain OS217 / ATCC BAA-1090 / DSM 15013)</name>
    <dbReference type="NCBI Taxonomy" id="318161"/>
    <lineage>
        <taxon>Bacteria</taxon>
        <taxon>Pseudomonadati</taxon>
        <taxon>Pseudomonadota</taxon>
        <taxon>Gammaproteobacteria</taxon>
        <taxon>Alteromonadales</taxon>
        <taxon>Shewanellaceae</taxon>
        <taxon>Shewanella</taxon>
    </lineage>
</organism>
<accession>Q12KL2</accession>
<protein>
    <recommendedName>
        <fullName evidence="1">Glucose-6-phosphate isomerase</fullName>
        <shortName evidence="1">GPI</shortName>
        <ecNumber evidence="1">5.3.1.9</ecNumber>
    </recommendedName>
    <alternativeName>
        <fullName evidence="1">Phosphoglucose isomerase</fullName>
        <shortName evidence="1">PGI</shortName>
    </alternativeName>
    <alternativeName>
        <fullName evidence="1">Phosphohexose isomerase</fullName>
        <shortName evidence="1">PHI</shortName>
    </alternativeName>
</protein>
<feature type="chain" id="PRO_1000014013" description="Glucose-6-phosphate isomerase">
    <location>
        <begin position="1"/>
        <end position="545"/>
    </location>
</feature>
<feature type="active site" description="Proton donor" evidence="1">
    <location>
        <position position="351"/>
    </location>
</feature>
<feature type="active site" evidence="1">
    <location>
        <position position="382"/>
    </location>
</feature>
<feature type="active site" evidence="1">
    <location>
        <position position="510"/>
    </location>
</feature>
<gene>
    <name evidence="1" type="primary">pgi</name>
    <name type="ordered locus">Sden_2735</name>
</gene>
<name>G6PI_SHEDO</name>
<proteinExistence type="inferred from homology"/>
<evidence type="ECO:0000255" key="1">
    <source>
        <dbReference type="HAMAP-Rule" id="MF_00473"/>
    </source>
</evidence>
<keyword id="KW-0963">Cytoplasm</keyword>
<keyword id="KW-0312">Gluconeogenesis</keyword>
<keyword id="KW-0324">Glycolysis</keyword>
<keyword id="KW-0413">Isomerase</keyword>
<keyword id="KW-1185">Reference proteome</keyword>
<dbReference type="EC" id="5.3.1.9" evidence="1"/>
<dbReference type="EMBL" id="CP000302">
    <property type="protein sequence ID" value="ABE56014.1"/>
    <property type="molecule type" value="Genomic_DNA"/>
</dbReference>
<dbReference type="RefSeq" id="WP_011497164.1">
    <property type="nucleotide sequence ID" value="NC_007954.1"/>
</dbReference>
<dbReference type="SMR" id="Q12KL2"/>
<dbReference type="STRING" id="318161.Sden_2735"/>
<dbReference type="KEGG" id="sdn:Sden_2735"/>
<dbReference type="eggNOG" id="COG0166">
    <property type="taxonomic scope" value="Bacteria"/>
</dbReference>
<dbReference type="HOGENOM" id="CLU_017947_3_1_6"/>
<dbReference type="OrthoDB" id="140919at2"/>
<dbReference type="UniPathway" id="UPA00109">
    <property type="reaction ID" value="UER00181"/>
</dbReference>
<dbReference type="UniPathway" id="UPA00138"/>
<dbReference type="Proteomes" id="UP000001982">
    <property type="component" value="Chromosome"/>
</dbReference>
<dbReference type="GO" id="GO:0005829">
    <property type="term" value="C:cytosol"/>
    <property type="evidence" value="ECO:0007669"/>
    <property type="project" value="TreeGrafter"/>
</dbReference>
<dbReference type="GO" id="GO:0097367">
    <property type="term" value="F:carbohydrate derivative binding"/>
    <property type="evidence" value="ECO:0007669"/>
    <property type="project" value="InterPro"/>
</dbReference>
<dbReference type="GO" id="GO:0004347">
    <property type="term" value="F:glucose-6-phosphate isomerase activity"/>
    <property type="evidence" value="ECO:0007669"/>
    <property type="project" value="UniProtKB-UniRule"/>
</dbReference>
<dbReference type="GO" id="GO:0048029">
    <property type="term" value="F:monosaccharide binding"/>
    <property type="evidence" value="ECO:0007669"/>
    <property type="project" value="TreeGrafter"/>
</dbReference>
<dbReference type="GO" id="GO:0006094">
    <property type="term" value="P:gluconeogenesis"/>
    <property type="evidence" value="ECO:0007669"/>
    <property type="project" value="UniProtKB-UniRule"/>
</dbReference>
<dbReference type="GO" id="GO:0051156">
    <property type="term" value="P:glucose 6-phosphate metabolic process"/>
    <property type="evidence" value="ECO:0007669"/>
    <property type="project" value="TreeGrafter"/>
</dbReference>
<dbReference type="GO" id="GO:0006096">
    <property type="term" value="P:glycolytic process"/>
    <property type="evidence" value="ECO:0007669"/>
    <property type="project" value="UniProtKB-UniRule"/>
</dbReference>
<dbReference type="CDD" id="cd05015">
    <property type="entry name" value="SIS_PGI_1"/>
    <property type="match status" value="1"/>
</dbReference>
<dbReference type="CDD" id="cd05016">
    <property type="entry name" value="SIS_PGI_2"/>
    <property type="match status" value="1"/>
</dbReference>
<dbReference type="FunFam" id="3.40.50.10490:FF:000018">
    <property type="entry name" value="Glucose-6-phosphate isomerase"/>
    <property type="match status" value="1"/>
</dbReference>
<dbReference type="Gene3D" id="1.10.1390.10">
    <property type="match status" value="1"/>
</dbReference>
<dbReference type="Gene3D" id="3.40.50.10490">
    <property type="entry name" value="Glucose-6-phosphate isomerase like protein, domain 1"/>
    <property type="match status" value="2"/>
</dbReference>
<dbReference type="HAMAP" id="MF_00473">
    <property type="entry name" value="G6P_isomerase"/>
    <property type="match status" value="1"/>
</dbReference>
<dbReference type="InterPro" id="IPR001672">
    <property type="entry name" value="G6P_Isomerase"/>
</dbReference>
<dbReference type="InterPro" id="IPR023096">
    <property type="entry name" value="G6P_Isomerase_C"/>
</dbReference>
<dbReference type="InterPro" id="IPR018189">
    <property type="entry name" value="Phosphoglucose_isomerase_CS"/>
</dbReference>
<dbReference type="InterPro" id="IPR046348">
    <property type="entry name" value="SIS_dom_sf"/>
</dbReference>
<dbReference type="InterPro" id="IPR035476">
    <property type="entry name" value="SIS_PGI_1"/>
</dbReference>
<dbReference type="InterPro" id="IPR035482">
    <property type="entry name" value="SIS_PGI_2"/>
</dbReference>
<dbReference type="NCBIfam" id="NF001211">
    <property type="entry name" value="PRK00179.1"/>
    <property type="match status" value="1"/>
</dbReference>
<dbReference type="PANTHER" id="PTHR11469">
    <property type="entry name" value="GLUCOSE-6-PHOSPHATE ISOMERASE"/>
    <property type="match status" value="1"/>
</dbReference>
<dbReference type="PANTHER" id="PTHR11469:SF1">
    <property type="entry name" value="GLUCOSE-6-PHOSPHATE ISOMERASE"/>
    <property type="match status" value="1"/>
</dbReference>
<dbReference type="Pfam" id="PF00342">
    <property type="entry name" value="PGI"/>
    <property type="match status" value="1"/>
</dbReference>
<dbReference type="PRINTS" id="PR00662">
    <property type="entry name" value="G6PISOMERASE"/>
</dbReference>
<dbReference type="SUPFAM" id="SSF53697">
    <property type="entry name" value="SIS domain"/>
    <property type="match status" value="1"/>
</dbReference>
<dbReference type="PROSITE" id="PS00765">
    <property type="entry name" value="P_GLUCOSE_ISOMERASE_1"/>
    <property type="match status" value="1"/>
</dbReference>
<dbReference type="PROSITE" id="PS00174">
    <property type="entry name" value="P_GLUCOSE_ISOMERASE_2"/>
    <property type="match status" value="1"/>
</dbReference>
<dbReference type="PROSITE" id="PS51463">
    <property type="entry name" value="P_GLUCOSE_ISOMERASE_3"/>
    <property type="match status" value="1"/>
</dbReference>
<sequence>MTQLTQSSCWQALIADAAKLPHMRDLFAQNPQRFEQMSLNACGLFLDYSKNRADETTLKLLFSLAKEAKLTEKIAAMFNGDIINTTEQRAVLHTALRSKACQDIRVDGVNIVPEVQQTLDKMAQFVDSVQTGQCKGYTGKRITDIVSIGIGGSFLGPKIVSQALRPYWKAGLNCHFVANVDASSICEKLKLLNAETTLFVMSSKSFGTQETLTNTLSAKDWFLDQGATQADIAKHFVAVTSNVTKATEFGMDADNIFPMWDWVGGRYSLWSAIGLPIALLIGMDNFRLLLDGAHQMDEHVKAAPLEQNMPVIMALLSVLYTNFHGAQSHVVLTYDHYLRGLPAYFQQLDMESNGKSVTLNGTQVDYSTGPVIWGGEGTNGQHAYHQLLHQGTALIPADFIMPLQSHNPLGEHHAQLASNCFGQTQALMQGRTFEEAMAELSQSSLNEADKTLIAKHKVMLGNKPSNTLLMDKLTPQTLGSLIALYEHRTLVQGAIWQINSFDQWGVELGKQLGNDVLARIGAAHNATELDSSSNALINRFRQGKI</sequence>